<dbReference type="EC" id="1.1.1.267" evidence="1"/>
<dbReference type="EMBL" id="CP000439">
    <property type="protein sequence ID" value="ABK90350.1"/>
    <property type="molecule type" value="Genomic_DNA"/>
</dbReference>
<dbReference type="RefSeq" id="WP_003037453.1">
    <property type="nucleotide sequence ID" value="NZ_CP009633.1"/>
</dbReference>
<dbReference type="SMR" id="A0Q7Y5"/>
<dbReference type="GeneID" id="75264779"/>
<dbReference type="KEGG" id="ftn:FTN_1483"/>
<dbReference type="KEGG" id="ftx:AW25_518"/>
<dbReference type="BioCyc" id="FTUL401614:G1G75-1531-MONOMER"/>
<dbReference type="UniPathway" id="UPA00056">
    <property type="reaction ID" value="UER00092"/>
</dbReference>
<dbReference type="Proteomes" id="UP000000762">
    <property type="component" value="Chromosome"/>
</dbReference>
<dbReference type="GO" id="GO:0030604">
    <property type="term" value="F:1-deoxy-D-xylulose-5-phosphate reductoisomerase activity"/>
    <property type="evidence" value="ECO:0007669"/>
    <property type="project" value="UniProtKB-UniRule"/>
</dbReference>
<dbReference type="GO" id="GO:0030145">
    <property type="term" value="F:manganese ion binding"/>
    <property type="evidence" value="ECO:0007669"/>
    <property type="project" value="TreeGrafter"/>
</dbReference>
<dbReference type="GO" id="GO:0070402">
    <property type="term" value="F:NADPH binding"/>
    <property type="evidence" value="ECO:0007669"/>
    <property type="project" value="InterPro"/>
</dbReference>
<dbReference type="GO" id="GO:0051484">
    <property type="term" value="P:isopentenyl diphosphate biosynthetic process, methylerythritol 4-phosphate pathway involved in terpenoid biosynthetic process"/>
    <property type="evidence" value="ECO:0007669"/>
    <property type="project" value="TreeGrafter"/>
</dbReference>
<dbReference type="FunFam" id="3.40.50.720:FF:000045">
    <property type="entry name" value="1-deoxy-D-xylulose 5-phosphate reductoisomerase"/>
    <property type="match status" value="1"/>
</dbReference>
<dbReference type="Gene3D" id="1.10.1740.10">
    <property type="match status" value="1"/>
</dbReference>
<dbReference type="Gene3D" id="3.40.50.720">
    <property type="entry name" value="NAD(P)-binding Rossmann-like Domain"/>
    <property type="match status" value="1"/>
</dbReference>
<dbReference type="HAMAP" id="MF_00183">
    <property type="entry name" value="DXP_reductoisom"/>
    <property type="match status" value="1"/>
</dbReference>
<dbReference type="InterPro" id="IPR003821">
    <property type="entry name" value="DXP_reductoisomerase"/>
</dbReference>
<dbReference type="InterPro" id="IPR013644">
    <property type="entry name" value="DXP_reductoisomerase_C"/>
</dbReference>
<dbReference type="InterPro" id="IPR013512">
    <property type="entry name" value="DXP_reductoisomerase_N"/>
</dbReference>
<dbReference type="InterPro" id="IPR026877">
    <property type="entry name" value="DXPR_C"/>
</dbReference>
<dbReference type="InterPro" id="IPR036169">
    <property type="entry name" value="DXPR_C_sf"/>
</dbReference>
<dbReference type="InterPro" id="IPR036291">
    <property type="entry name" value="NAD(P)-bd_dom_sf"/>
</dbReference>
<dbReference type="NCBIfam" id="TIGR00243">
    <property type="entry name" value="Dxr"/>
    <property type="match status" value="1"/>
</dbReference>
<dbReference type="PANTHER" id="PTHR30525">
    <property type="entry name" value="1-DEOXY-D-XYLULOSE 5-PHOSPHATE REDUCTOISOMERASE"/>
    <property type="match status" value="1"/>
</dbReference>
<dbReference type="PANTHER" id="PTHR30525:SF0">
    <property type="entry name" value="1-DEOXY-D-XYLULOSE 5-PHOSPHATE REDUCTOISOMERASE, CHLOROPLASTIC"/>
    <property type="match status" value="1"/>
</dbReference>
<dbReference type="Pfam" id="PF08436">
    <property type="entry name" value="DXP_redisom_C"/>
    <property type="match status" value="1"/>
</dbReference>
<dbReference type="Pfam" id="PF02670">
    <property type="entry name" value="DXP_reductoisom"/>
    <property type="match status" value="1"/>
</dbReference>
<dbReference type="Pfam" id="PF13288">
    <property type="entry name" value="DXPR_C"/>
    <property type="match status" value="1"/>
</dbReference>
<dbReference type="PIRSF" id="PIRSF006205">
    <property type="entry name" value="Dxp_reductismrs"/>
    <property type="match status" value="1"/>
</dbReference>
<dbReference type="SUPFAM" id="SSF69055">
    <property type="entry name" value="1-deoxy-D-xylulose-5-phosphate reductoisomerase, C-terminal domain"/>
    <property type="match status" value="1"/>
</dbReference>
<dbReference type="SUPFAM" id="SSF55347">
    <property type="entry name" value="Glyceraldehyde-3-phosphate dehydrogenase-like, C-terminal domain"/>
    <property type="match status" value="1"/>
</dbReference>
<dbReference type="SUPFAM" id="SSF51735">
    <property type="entry name" value="NAD(P)-binding Rossmann-fold domains"/>
    <property type="match status" value="1"/>
</dbReference>
<evidence type="ECO:0000255" key="1">
    <source>
        <dbReference type="HAMAP-Rule" id="MF_00183"/>
    </source>
</evidence>
<accession>A0Q7Y5</accession>
<reference key="1">
    <citation type="journal article" date="2007" name="Genome Biol.">
        <title>Comparison of Francisella tularensis genomes reveals evolutionary events associated with the emergence of human pathogenic strains.</title>
        <authorList>
            <person name="Rohmer L."/>
            <person name="Fong C."/>
            <person name="Abmayr S."/>
            <person name="Wasnick M."/>
            <person name="Larson Freeman T.J."/>
            <person name="Radey M."/>
            <person name="Guina T."/>
            <person name="Svensson K."/>
            <person name="Hayden H.S."/>
            <person name="Jacobs M."/>
            <person name="Gallagher L.A."/>
            <person name="Manoil C."/>
            <person name="Ernst R.K."/>
            <person name="Drees B."/>
            <person name="Buckley D."/>
            <person name="Haugen E."/>
            <person name="Bovee D."/>
            <person name="Zhou Y."/>
            <person name="Chang J."/>
            <person name="Levy R."/>
            <person name="Lim R."/>
            <person name="Gillett W."/>
            <person name="Guenthener D."/>
            <person name="Kang A."/>
            <person name="Shaffer S.A."/>
            <person name="Taylor G."/>
            <person name="Chen J."/>
            <person name="Gallis B."/>
            <person name="D'Argenio D.A."/>
            <person name="Forsman M."/>
            <person name="Olson M.V."/>
            <person name="Goodlett D.R."/>
            <person name="Kaul R."/>
            <person name="Miller S.I."/>
            <person name="Brittnacher M.J."/>
        </authorList>
    </citation>
    <scope>NUCLEOTIDE SEQUENCE [LARGE SCALE GENOMIC DNA]</scope>
    <source>
        <strain>U112</strain>
    </source>
</reference>
<sequence length="385" mass="42773">MFKKTKITILGATGSIGDSTLAVIRETNDFEVFALTAFSNVEKLAELCQEFKPKFAVVPDLSKKQKLQSLVTDVEVLVGESGLEKVSSLAEVDIVMSAIVGIAGLKPTFAAAKAGKKILLANKESLVTAGHLLIDEVVKNNAQLIPVDSEHNAIFQCIDNHDKKCLPEIDKIILTASGGPFRDKQLHELTDVTPEQACNHPNWQMGRKISVDSSTMVNKALEVIEAYWLFSVSADKIGVLIHPQSVIHSMVRYVDGSYIAQLGVPDMKTPIANAMYYPKRGSVNVESLDFTKYQLTFREACFERFGALKIVFNNLQNKNYAANIVFNAANEELVAAFLNKKIKYLEIIEVNKKVTKELNFENPKNIEEVFEIDRKTREYVDSVLG</sequence>
<keyword id="KW-0414">Isoprene biosynthesis</keyword>
<keyword id="KW-0464">Manganese</keyword>
<keyword id="KW-0479">Metal-binding</keyword>
<keyword id="KW-0521">NADP</keyword>
<keyword id="KW-0560">Oxidoreductase</keyword>
<name>DXR_FRATN</name>
<gene>
    <name evidence="1" type="primary">dxr</name>
    <name type="ordered locus">FTN_1483</name>
</gene>
<feature type="chain" id="PRO_1000020263" description="1-deoxy-D-xylulose 5-phosphate reductoisomerase">
    <location>
        <begin position="1"/>
        <end position="385"/>
    </location>
</feature>
<feature type="binding site" evidence="1">
    <location>
        <position position="13"/>
    </location>
    <ligand>
        <name>NADPH</name>
        <dbReference type="ChEBI" id="CHEBI:57783"/>
    </ligand>
</feature>
<feature type="binding site" evidence="1">
    <location>
        <position position="14"/>
    </location>
    <ligand>
        <name>NADPH</name>
        <dbReference type="ChEBI" id="CHEBI:57783"/>
    </ligand>
</feature>
<feature type="binding site" evidence="1">
    <location>
        <position position="15"/>
    </location>
    <ligand>
        <name>NADPH</name>
        <dbReference type="ChEBI" id="CHEBI:57783"/>
    </ligand>
</feature>
<feature type="binding site" evidence="1">
    <location>
        <position position="16"/>
    </location>
    <ligand>
        <name>NADPH</name>
        <dbReference type="ChEBI" id="CHEBI:57783"/>
    </ligand>
</feature>
<feature type="binding site" evidence="1">
    <location>
        <position position="40"/>
    </location>
    <ligand>
        <name>NADPH</name>
        <dbReference type="ChEBI" id="CHEBI:57783"/>
    </ligand>
</feature>
<feature type="binding site" evidence="1">
    <location>
        <position position="122"/>
    </location>
    <ligand>
        <name>NADPH</name>
        <dbReference type="ChEBI" id="CHEBI:57783"/>
    </ligand>
</feature>
<feature type="binding site" evidence="1">
    <location>
        <position position="123"/>
    </location>
    <ligand>
        <name>1-deoxy-D-xylulose 5-phosphate</name>
        <dbReference type="ChEBI" id="CHEBI:57792"/>
    </ligand>
</feature>
<feature type="binding site" evidence="1">
    <location>
        <position position="124"/>
    </location>
    <ligand>
        <name>NADPH</name>
        <dbReference type="ChEBI" id="CHEBI:57783"/>
    </ligand>
</feature>
<feature type="binding site" evidence="1">
    <location>
        <position position="148"/>
    </location>
    <ligand>
        <name>Mn(2+)</name>
        <dbReference type="ChEBI" id="CHEBI:29035"/>
    </ligand>
</feature>
<feature type="binding site" evidence="1">
    <location>
        <position position="149"/>
    </location>
    <ligand>
        <name>1-deoxy-D-xylulose 5-phosphate</name>
        <dbReference type="ChEBI" id="CHEBI:57792"/>
    </ligand>
</feature>
<feature type="binding site" evidence="1">
    <location>
        <position position="150"/>
    </location>
    <ligand>
        <name>1-deoxy-D-xylulose 5-phosphate</name>
        <dbReference type="ChEBI" id="CHEBI:57792"/>
    </ligand>
</feature>
<feature type="binding site" evidence="1">
    <location>
        <position position="150"/>
    </location>
    <ligand>
        <name>Mn(2+)</name>
        <dbReference type="ChEBI" id="CHEBI:29035"/>
    </ligand>
</feature>
<feature type="binding site" evidence="1">
    <location>
        <position position="177"/>
    </location>
    <ligand>
        <name>1-deoxy-D-xylulose 5-phosphate</name>
        <dbReference type="ChEBI" id="CHEBI:57792"/>
    </ligand>
</feature>
<feature type="binding site" evidence="1">
    <location>
        <position position="200"/>
    </location>
    <ligand>
        <name>1-deoxy-D-xylulose 5-phosphate</name>
        <dbReference type="ChEBI" id="CHEBI:57792"/>
    </ligand>
</feature>
<feature type="binding site" evidence="1">
    <location>
        <position position="206"/>
    </location>
    <ligand>
        <name>NADPH</name>
        <dbReference type="ChEBI" id="CHEBI:57783"/>
    </ligand>
</feature>
<feature type="binding site" evidence="1">
    <location>
        <position position="213"/>
    </location>
    <ligand>
        <name>1-deoxy-D-xylulose 5-phosphate</name>
        <dbReference type="ChEBI" id="CHEBI:57792"/>
    </ligand>
</feature>
<feature type="binding site" evidence="1">
    <location>
        <position position="218"/>
    </location>
    <ligand>
        <name>1-deoxy-D-xylulose 5-phosphate</name>
        <dbReference type="ChEBI" id="CHEBI:57792"/>
    </ligand>
</feature>
<feature type="binding site" evidence="1">
    <location>
        <position position="219"/>
    </location>
    <ligand>
        <name>1-deoxy-D-xylulose 5-phosphate</name>
        <dbReference type="ChEBI" id="CHEBI:57792"/>
    </ligand>
</feature>
<feature type="binding site" evidence="1">
    <location>
        <position position="222"/>
    </location>
    <ligand>
        <name>1-deoxy-D-xylulose 5-phosphate</name>
        <dbReference type="ChEBI" id="CHEBI:57792"/>
    </ligand>
</feature>
<feature type="binding site" evidence="1">
    <location>
        <position position="222"/>
    </location>
    <ligand>
        <name>Mn(2+)</name>
        <dbReference type="ChEBI" id="CHEBI:29035"/>
    </ligand>
</feature>
<proteinExistence type="inferred from homology"/>
<protein>
    <recommendedName>
        <fullName evidence="1">1-deoxy-D-xylulose 5-phosphate reductoisomerase</fullName>
        <shortName evidence="1">DXP reductoisomerase</shortName>
        <ecNumber evidence="1">1.1.1.267</ecNumber>
    </recommendedName>
    <alternativeName>
        <fullName evidence="1">1-deoxyxylulose-5-phosphate reductoisomerase</fullName>
    </alternativeName>
    <alternativeName>
        <fullName evidence="1">2-C-methyl-D-erythritol 4-phosphate synthase</fullName>
    </alternativeName>
</protein>
<organism>
    <name type="scientific">Francisella tularensis subsp. novicida (strain U112)</name>
    <dbReference type="NCBI Taxonomy" id="401614"/>
    <lineage>
        <taxon>Bacteria</taxon>
        <taxon>Pseudomonadati</taxon>
        <taxon>Pseudomonadota</taxon>
        <taxon>Gammaproteobacteria</taxon>
        <taxon>Thiotrichales</taxon>
        <taxon>Francisellaceae</taxon>
        <taxon>Francisella</taxon>
    </lineage>
</organism>
<comment type="function">
    <text evidence="1">Catalyzes the NADPH-dependent rearrangement and reduction of 1-deoxy-D-xylulose-5-phosphate (DXP) to 2-C-methyl-D-erythritol 4-phosphate (MEP).</text>
</comment>
<comment type="catalytic activity">
    <reaction evidence="1">
        <text>2-C-methyl-D-erythritol 4-phosphate + NADP(+) = 1-deoxy-D-xylulose 5-phosphate + NADPH + H(+)</text>
        <dbReference type="Rhea" id="RHEA:13717"/>
        <dbReference type="ChEBI" id="CHEBI:15378"/>
        <dbReference type="ChEBI" id="CHEBI:57783"/>
        <dbReference type="ChEBI" id="CHEBI:57792"/>
        <dbReference type="ChEBI" id="CHEBI:58262"/>
        <dbReference type="ChEBI" id="CHEBI:58349"/>
        <dbReference type="EC" id="1.1.1.267"/>
    </reaction>
    <physiologicalReaction direction="right-to-left" evidence="1">
        <dbReference type="Rhea" id="RHEA:13719"/>
    </physiologicalReaction>
</comment>
<comment type="cofactor">
    <cofactor evidence="1">
        <name>Mg(2+)</name>
        <dbReference type="ChEBI" id="CHEBI:18420"/>
    </cofactor>
    <cofactor evidence="1">
        <name>Mn(2+)</name>
        <dbReference type="ChEBI" id="CHEBI:29035"/>
    </cofactor>
</comment>
<comment type="pathway">
    <text evidence="1">Isoprenoid biosynthesis; isopentenyl diphosphate biosynthesis via DXP pathway; isopentenyl diphosphate from 1-deoxy-D-xylulose 5-phosphate: step 1/6.</text>
</comment>
<comment type="similarity">
    <text evidence="1">Belongs to the DXR family.</text>
</comment>